<sequence length="43" mass="4662">METATLVAISISGLLVSFTGYALYTAFGQPSQQLRDPFEEHGD</sequence>
<comment type="function">
    <text evidence="1">May play a role in photosystem I and II biogenesis.</text>
</comment>
<comment type="subcellular location">
    <subcellularLocation>
        <location evidence="1">Plastid</location>
        <location evidence="1">Chloroplast thylakoid membrane</location>
        <topology evidence="1">Single-pass membrane protein</topology>
    </subcellularLocation>
</comment>
<comment type="similarity">
    <text evidence="1">Belongs to the PsbN family.</text>
</comment>
<comment type="caution">
    <text evidence="1">Originally thought to be a component of PSII; based on experiments in Synechocystis, N.tabacum and barley, and its absence from PSII in T.elongatus and T.vulcanus, this is probably not true.</text>
</comment>
<geneLocation type="chloroplast"/>
<accession>Q67HX4</accession>
<proteinExistence type="inferred from homology"/>
<organism>
    <name type="scientific">Phormium tenax</name>
    <name type="common">New Zealand flax</name>
    <dbReference type="NCBI Taxonomy" id="51475"/>
    <lineage>
        <taxon>Eukaryota</taxon>
        <taxon>Viridiplantae</taxon>
        <taxon>Streptophyta</taxon>
        <taxon>Embryophyta</taxon>
        <taxon>Tracheophyta</taxon>
        <taxon>Spermatophyta</taxon>
        <taxon>Magnoliopsida</taxon>
        <taxon>Liliopsida</taxon>
        <taxon>Asparagales</taxon>
        <taxon>Asphodelaceae</taxon>
        <taxon>Hemerocallidoideae</taxon>
        <taxon>Phormium</taxon>
    </lineage>
</organism>
<reference key="1">
    <citation type="submission" date="2002-09" db="EMBL/GenBank/DDBJ databases">
        <title>Phylogenetic relationships among the major lineages of Asparagales based on a large chloroplast data set.</title>
        <authorList>
            <person name="McPherson M.A."/>
            <person name="Rai H.S."/>
            <person name="Wong W.A."/>
            <person name="Graham S.W."/>
        </authorList>
    </citation>
    <scope>NUCLEOTIDE SEQUENCE [GENOMIC DNA]</scope>
</reference>
<evidence type="ECO:0000255" key="1">
    <source>
        <dbReference type="HAMAP-Rule" id="MF_00293"/>
    </source>
</evidence>
<name>PSBN_PHOTN</name>
<dbReference type="EMBL" id="AY147532">
    <property type="protein sequence ID" value="AAN32228.1"/>
    <property type="molecule type" value="Genomic_DNA"/>
</dbReference>
<dbReference type="SMR" id="Q67HX4"/>
<dbReference type="GO" id="GO:0009535">
    <property type="term" value="C:chloroplast thylakoid membrane"/>
    <property type="evidence" value="ECO:0007669"/>
    <property type="project" value="UniProtKB-SubCell"/>
</dbReference>
<dbReference type="GO" id="GO:0015979">
    <property type="term" value="P:photosynthesis"/>
    <property type="evidence" value="ECO:0007669"/>
    <property type="project" value="InterPro"/>
</dbReference>
<dbReference type="HAMAP" id="MF_00293">
    <property type="entry name" value="PSII_PsbN"/>
    <property type="match status" value="1"/>
</dbReference>
<dbReference type="InterPro" id="IPR003398">
    <property type="entry name" value="PSII_PsbN"/>
</dbReference>
<dbReference type="PANTHER" id="PTHR35326">
    <property type="entry name" value="PROTEIN PSBN"/>
    <property type="match status" value="1"/>
</dbReference>
<dbReference type="PANTHER" id="PTHR35326:SF3">
    <property type="entry name" value="PROTEIN PSBN"/>
    <property type="match status" value="1"/>
</dbReference>
<dbReference type="Pfam" id="PF02468">
    <property type="entry name" value="PsbN"/>
    <property type="match status" value="1"/>
</dbReference>
<gene>
    <name evidence="1" type="primary">psbN</name>
</gene>
<keyword id="KW-0150">Chloroplast</keyword>
<keyword id="KW-0472">Membrane</keyword>
<keyword id="KW-0934">Plastid</keyword>
<keyword id="KW-0793">Thylakoid</keyword>
<keyword id="KW-0812">Transmembrane</keyword>
<keyword id="KW-1133">Transmembrane helix</keyword>
<feature type="chain" id="PRO_0000207938" description="Protein PsbN">
    <location>
        <begin position="1"/>
        <end position="43"/>
    </location>
</feature>
<feature type="transmembrane region" description="Helical" evidence="1">
    <location>
        <begin position="5"/>
        <end position="27"/>
    </location>
</feature>
<protein>
    <recommendedName>
        <fullName evidence="1">Protein PsbN</fullName>
    </recommendedName>
</protein>